<feature type="signal peptide" evidence="1">
    <location>
        <begin position="1"/>
        <end position="23"/>
    </location>
</feature>
<feature type="chain" id="PRO_0000020993" description="Cysteine-rich, acidic integral membrane protein" evidence="1">
    <location>
        <begin position="24"/>
        <end position="945"/>
    </location>
</feature>
<feature type="topological domain" description="Extracellular" evidence="1">
    <location>
        <begin position="24"/>
        <end position="882"/>
    </location>
</feature>
<feature type="transmembrane region" description="Helical" evidence="1">
    <location>
        <begin position="883"/>
        <end position="903"/>
    </location>
</feature>
<feature type="topological domain" description="Cytoplasmic" evidence="1">
    <location>
        <begin position="904"/>
        <end position="945"/>
    </location>
</feature>
<feature type="repeat" description="1">
    <location>
        <begin position="40"/>
        <end position="51"/>
    </location>
</feature>
<feature type="repeat" description="2">
    <location>
        <begin position="52"/>
        <end position="63"/>
    </location>
</feature>
<feature type="repeat" description="3">
    <location>
        <begin position="64"/>
        <end position="75"/>
    </location>
</feature>
<feature type="repeat" description="4">
    <location>
        <begin position="76"/>
        <end position="87"/>
    </location>
</feature>
<feature type="repeat" description="5">
    <location>
        <begin position="88"/>
        <end position="99"/>
    </location>
</feature>
<feature type="repeat" description="6">
    <location>
        <begin position="100"/>
        <end position="111"/>
    </location>
</feature>
<feature type="repeat" description="7">
    <location>
        <begin position="112"/>
        <end position="123"/>
    </location>
</feature>
<feature type="repeat" description="8">
    <location>
        <begin position="124"/>
        <end position="135"/>
    </location>
</feature>
<feature type="repeat" description="9">
    <location>
        <begin position="136"/>
        <end position="147"/>
    </location>
</feature>
<feature type="repeat" description="10">
    <location>
        <begin position="148"/>
        <end position="159"/>
    </location>
</feature>
<feature type="repeat" description="11">
    <location>
        <begin position="160"/>
        <end position="171"/>
    </location>
</feature>
<feature type="repeat" description="12">
    <location>
        <begin position="172"/>
        <end position="183"/>
    </location>
</feature>
<feature type="repeat" description="13">
    <location>
        <begin position="184"/>
        <end position="195"/>
    </location>
</feature>
<feature type="repeat" description="14">
    <location>
        <begin position="196"/>
        <end position="207"/>
    </location>
</feature>
<feature type="repeat" description="15">
    <location>
        <begin position="208"/>
        <end position="219"/>
    </location>
</feature>
<feature type="repeat" description="16">
    <location>
        <begin position="220"/>
        <end position="231"/>
    </location>
</feature>
<feature type="repeat" description="17">
    <location>
        <begin position="232"/>
        <end position="243"/>
    </location>
</feature>
<feature type="repeat" description="18">
    <location>
        <begin position="244"/>
        <end position="255"/>
    </location>
</feature>
<feature type="repeat" description="19">
    <location>
        <begin position="256"/>
        <end position="267"/>
    </location>
</feature>
<feature type="repeat" description="20">
    <location>
        <begin position="268"/>
        <end position="279"/>
    </location>
</feature>
<feature type="repeat" description="21">
    <location>
        <begin position="280"/>
        <end position="291"/>
    </location>
</feature>
<feature type="repeat" description="22">
    <location>
        <begin position="292"/>
        <end position="303"/>
    </location>
</feature>
<feature type="repeat" description="23">
    <location>
        <begin position="304"/>
        <end position="315"/>
    </location>
</feature>
<feature type="repeat" description="24">
    <location>
        <begin position="316"/>
        <end position="327"/>
    </location>
</feature>
<feature type="repeat" description="25">
    <location>
        <begin position="328"/>
        <end position="339"/>
    </location>
</feature>
<feature type="repeat" description="26">
    <location>
        <begin position="340"/>
        <end position="351"/>
    </location>
</feature>
<feature type="repeat" description="27">
    <location>
        <begin position="352"/>
        <end position="363"/>
    </location>
</feature>
<feature type="repeat" description="28">
    <location>
        <begin position="364"/>
        <end position="375"/>
    </location>
</feature>
<feature type="repeat" description="29">
    <location>
        <begin position="376"/>
        <end position="387"/>
    </location>
</feature>
<feature type="repeat" description="30">
    <location>
        <begin position="388"/>
        <end position="399"/>
    </location>
</feature>
<feature type="repeat" description="31">
    <location>
        <begin position="400"/>
        <end position="411"/>
    </location>
</feature>
<feature type="repeat" description="32">
    <location>
        <begin position="412"/>
        <end position="423"/>
    </location>
</feature>
<feature type="repeat" description="33">
    <location>
        <begin position="424"/>
        <end position="435"/>
    </location>
</feature>
<feature type="repeat" description="34">
    <location>
        <begin position="436"/>
        <end position="447"/>
    </location>
</feature>
<feature type="repeat" description="35">
    <location>
        <begin position="448"/>
        <end position="459"/>
    </location>
</feature>
<feature type="repeat" description="36">
    <location>
        <begin position="460"/>
        <end position="471"/>
    </location>
</feature>
<feature type="repeat" description="37">
    <location>
        <begin position="472"/>
        <end position="483"/>
    </location>
</feature>
<feature type="repeat" description="38">
    <location>
        <begin position="484"/>
        <end position="495"/>
    </location>
</feature>
<feature type="repeat" description="39">
    <location>
        <begin position="496"/>
        <end position="507"/>
    </location>
</feature>
<feature type="repeat" description="40">
    <location>
        <begin position="508"/>
        <end position="519"/>
    </location>
</feature>
<feature type="repeat" description="41">
    <location>
        <begin position="520"/>
        <end position="531"/>
    </location>
</feature>
<feature type="repeat" description="42">
    <location>
        <begin position="532"/>
        <end position="543"/>
    </location>
</feature>
<feature type="repeat" description="43">
    <location>
        <begin position="544"/>
        <end position="555"/>
    </location>
</feature>
<feature type="repeat" description="44">
    <location>
        <begin position="556"/>
        <end position="567"/>
    </location>
</feature>
<feature type="repeat" description="45">
    <location>
        <begin position="568"/>
        <end position="579"/>
    </location>
</feature>
<feature type="repeat" description="46">
    <location>
        <begin position="580"/>
        <end position="591"/>
    </location>
</feature>
<feature type="repeat" description="47">
    <location>
        <begin position="592"/>
        <end position="603"/>
    </location>
</feature>
<feature type="repeat" description="48">
    <location>
        <begin position="604"/>
        <end position="615"/>
    </location>
</feature>
<feature type="repeat" description="49">
    <location>
        <begin position="616"/>
        <end position="627"/>
    </location>
</feature>
<feature type="repeat" description="50">
    <location>
        <begin position="628"/>
        <end position="639"/>
    </location>
</feature>
<feature type="repeat" description="51">
    <location>
        <begin position="640"/>
        <end position="651"/>
    </location>
</feature>
<feature type="repeat" description="52">
    <location>
        <begin position="652"/>
        <end position="663"/>
    </location>
</feature>
<feature type="repeat" description="53">
    <location>
        <begin position="664"/>
        <end position="675"/>
    </location>
</feature>
<feature type="repeat" description="54">
    <location>
        <begin position="676"/>
        <end position="687"/>
    </location>
</feature>
<feature type="repeat" description="55">
    <location>
        <begin position="688"/>
        <end position="699"/>
    </location>
</feature>
<feature type="repeat" description="56">
    <location>
        <begin position="700"/>
        <end position="711"/>
    </location>
</feature>
<feature type="repeat" description="57">
    <location>
        <begin position="712"/>
        <end position="723"/>
    </location>
</feature>
<feature type="repeat" description="58">
    <location>
        <begin position="724"/>
        <end position="735"/>
    </location>
</feature>
<feature type="repeat" description="59">
    <location>
        <begin position="736"/>
        <end position="747"/>
    </location>
</feature>
<feature type="repeat" description="60">
    <location>
        <begin position="748"/>
        <end position="759"/>
    </location>
</feature>
<feature type="repeat" description="61">
    <location>
        <begin position="760"/>
        <end position="771"/>
    </location>
</feature>
<feature type="repeat" description="62">
    <location>
        <begin position="772"/>
        <end position="783"/>
    </location>
</feature>
<feature type="repeat" description="63">
    <location>
        <begin position="784"/>
        <end position="795"/>
    </location>
</feature>
<feature type="repeat" description="64">
    <location>
        <begin position="796"/>
        <end position="807"/>
    </location>
</feature>
<feature type="repeat" description="65">
    <location>
        <begin position="808"/>
        <end position="819"/>
    </location>
</feature>
<feature type="repeat" description="66">
    <location>
        <begin position="820"/>
        <end position="831"/>
    </location>
</feature>
<feature type="region of interest" description="Disordered" evidence="2">
    <location>
        <begin position="1"/>
        <end position="20"/>
    </location>
</feature>
<feature type="region of interest" description="66 X 12 AA tandem repeats of D-D-C-[ND]-I-T-G-D-G-N-E-T">
    <location>
        <begin position="40"/>
        <end position="831"/>
    </location>
</feature>
<feature type="glycosylation site" description="N-linked (GlcNAc...) asparagine" evidence="1">
    <location>
        <position position="34"/>
    </location>
</feature>
<feature type="glycosylation site" description="N-linked (GlcNAc...) asparagine" evidence="1">
    <location>
        <position position="43"/>
    </location>
</feature>
<feature type="glycosylation site" description="N-linked (GlcNAc...) asparagine" evidence="1">
    <location>
        <position position="67"/>
    </location>
</feature>
<feature type="glycosylation site" description="N-linked (GlcNAc...) asparagine" evidence="1">
    <location>
        <position position="79"/>
    </location>
</feature>
<feature type="glycosylation site" description="N-linked (GlcNAc...) asparagine" evidence="1">
    <location>
        <position position="91"/>
    </location>
</feature>
<feature type="glycosylation site" description="N-linked (GlcNAc...) asparagine" evidence="1">
    <location>
        <position position="103"/>
    </location>
</feature>
<feature type="glycosylation site" description="N-linked (GlcNAc...) asparagine" evidence="1">
    <location>
        <position position="127"/>
    </location>
</feature>
<feature type="glycosylation site" description="N-linked (GlcNAc...) asparagine" evidence="1">
    <location>
        <position position="139"/>
    </location>
</feature>
<feature type="glycosylation site" description="N-linked (GlcNAc...) asparagine" evidence="1">
    <location>
        <position position="151"/>
    </location>
</feature>
<feature type="glycosylation site" description="N-linked (GlcNAc...) asparagine" evidence="1">
    <location>
        <position position="175"/>
    </location>
</feature>
<feature type="glycosylation site" description="N-linked (GlcNAc...) asparagine" evidence="1">
    <location>
        <position position="199"/>
    </location>
</feature>
<feature type="glycosylation site" description="N-linked (GlcNAc...) asparagine" evidence="1">
    <location>
        <position position="211"/>
    </location>
</feature>
<feature type="glycosylation site" description="N-linked (GlcNAc...) asparagine" evidence="1">
    <location>
        <position position="223"/>
    </location>
</feature>
<feature type="glycosylation site" description="N-linked (GlcNAc...) asparagine" evidence="1">
    <location>
        <position position="235"/>
    </location>
</feature>
<feature type="glycosylation site" description="N-linked (GlcNAc...) asparagine" evidence="1">
    <location>
        <position position="247"/>
    </location>
</feature>
<feature type="glycosylation site" description="N-linked (GlcNAc...) asparagine" evidence="1">
    <location>
        <position position="259"/>
    </location>
</feature>
<feature type="glycosylation site" description="N-linked (GlcNAc...) asparagine" evidence="1">
    <location>
        <position position="283"/>
    </location>
</feature>
<feature type="glycosylation site" description="N-linked (GlcNAc...) asparagine" evidence="1">
    <location>
        <position position="295"/>
    </location>
</feature>
<feature type="glycosylation site" description="N-linked (GlcNAc...) asparagine" evidence="1">
    <location>
        <position position="307"/>
    </location>
</feature>
<feature type="glycosylation site" description="N-linked (GlcNAc...) asparagine" evidence="1">
    <location>
        <position position="319"/>
    </location>
</feature>
<feature type="glycosylation site" description="N-linked (GlcNAc...) asparagine" evidence="1">
    <location>
        <position position="331"/>
    </location>
</feature>
<feature type="glycosylation site" description="N-linked (GlcNAc...) asparagine" evidence="1">
    <location>
        <position position="343"/>
    </location>
</feature>
<feature type="glycosylation site" description="N-linked (GlcNAc...) asparagine" evidence="1">
    <location>
        <position position="367"/>
    </location>
</feature>
<feature type="glycosylation site" description="N-linked (GlcNAc...) asparagine" evidence="1">
    <location>
        <position position="379"/>
    </location>
</feature>
<feature type="glycosylation site" description="N-linked (GlcNAc...) asparagine" evidence="1">
    <location>
        <position position="391"/>
    </location>
</feature>
<feature type="glycosylation site" description="N-linked (GlcNAc...) asparagine" evidence="1">
    <location>
        <position position="403"/>
    </location>
</feature>
<feature type="glycosylation site" description="N-linked (GlcNAc...) asparagine" evidence="1">
    <location>
        <position position="415"/>
    </location>
</feature>
<feature type="glycosylation site" description="N-linked (GlcNAc...) asparagine" evidence="1">
    <location>
        <position position="439"/>
    </location>
</feature>
<feature type="glycosylation site" description="N-linked (GlcNAc...) asparagine" evidence="1">
    <location>
        <position position="463"/>
    </location>
</feature>
<feature type="glycosylation site" description="N-linked (GlcNAc...) asparagine" evidence="1">
    <location>
        <position position="475"/>
    </location>
</feature>
<feature type="glycosylation site" description="N-linked (GlcNAc...) asparagine" evidence="1">
    <location>
        <position position="487"/>
    </location>
</feature>
<feature type="glycosylation site" description="N-linked (GlcNAc...) asparagine" evidence="1">
    <location>
        <position position="499"/>
    </location>
</feature>
<feature type="glycosylation site" description="N-linked (GlcNAc...) asparagine" evidence="1">
    <location>
        <position position="511"/>
    </location>
</feature>
<feature type="glycosylation site" description="N-linked (GlcNAc...) asparagine" evidence="1">
    <location>
        <position position="523"/>
    </location>
</feature>
<feature type="glycosylation site" description="N-linked (GlcNAc...) asparagine" evidence="1">
    <location>
        <position position="547"/>
    </location>
</feature>
<feature type="glycosylation site" description="N-linked (GlcNAc...) asparagine" evidence="1">
    <location>
        <position position="559"/>
    </location>
</feature>
<feature type="glycosylation site" description="N-linked (GlcNAc...) asparagine" evidence="1">
    <location>
        <position position="571"/>
    </location>
</feature>
<feature type="glycosylation site" description="N-linked (GlcNAc...) asparagine" evidence="1">
    <location>
        <position position="583"/>
    </location>
</feature>
<feature type="glycosylation site" description="N-linked (GlcNAc...) asparagine" evidence="1">
    <location>
        <position position="595"/>
    </location>
</feature>
<feature type="glycosylation site" description="N-linked (GlcNAc...) asparagine" evidence="1">
    <location>
        <position position="619"/>
    </location>
</feature>
<feature type="glycosylation site" description="N-linked (GlcNAc...) asparagine" evidence="1">
    <location>
        <position position="643"/>
    </location>
</feature>
<feature type="glycosylation site" description="N-linked (GlcNAc...) asparagine" evidence="1">
    <location>
        <position position="655"/>
    </location>
</feature>
<feature type="glycosylation site" description="N-linked (GlcNAc...) asparagine" evidence="1">
    <location>
        <position position="667"/>
    </location>
</feature>
<feature type="glycosylation site" description="N-linked (GlcNAc...) asparagine" evidence="1">
    <location>
        <position position="679"/>
    </location>
</feature>
<feature type="glycosylation site" description="N-linked (GlcNAc...) asparagine" evidence="1">
    <location>
        <position position="691"/>
    </location>
</feature>
<feature type="glycosylation site" description="N-linked (GlcNAc...) asparagine" evidence="1">
    <location>
        <position position="703"/>
    </location>
</feature>
<feature type="glycosylation site" description="N-linked (GlcNAc...) asparagine" evidence="1">
    <location>
        <position position="727"/>
    </location>
</feature>
<feature type="glycosylation site" description="N-linked (GlcNAc...) asparagine" evidence="1">
    <location>
        <position position="739"/>
    </location>
</feature>
<feature type="glycosylation site" description="N-linked (GlcNAc...) asparagine" evidence="1">
    <location>
        <position position="751"/>
    </location>
</feature>
<feature type="glycosylation site" description="N-linked (GlcNAc...) asparagine" evidence="1">
    <location>
        <position position="763"/>
    </location>
</feature>
<feature type="glycosylation site" description="N-linked (GlcNAc...) asparagine" evidence="1">
    <location>
        <position position="775"/>
    </location>
</feature>
<feature type="glycosylation site" description="N-linked (GlcNAc...) asparagine" evidence="1">
    <location>
        <position position="799"/>
    </location>
</feature>
<feature type="glycosylation site" description="N-linked (GlcNAc...) asparagine" evidence="1">
    <location>
        <position position="823"/>
    </location>
</feature>
<accession>Q03650</accession>
<reference key="1">
    <citation type="journal article" date="1990" name="Mol. Cell. Biol.">
        <title>Characterization of a cDNA encoding a cysteine-rich cell surface protein located in the flagellar pocket of the protozoan Trypanosoma brucei.</title>
        <authorList>
            <person name="Lee G.S.M."/>
            <person name="Bihain B.E."/>
            <person name="Russell D.G."/>
            <person name="Deckelbaum R.J."/>
            <person name="Ploeg L.H."/>
        </authorList>
    </citation>
    <scope>NUCLEOTIDE SEQUENCE [MRNA]</scope>
    <source>
        <strain>Treu667But55</strain>
    </source>
</reference>
<name>CRAM_TRYBB</name>
<proteinExistence type="evidence at transcript level"/>
<dbReference type="EMBL" id="M55686">
    <property type="protein sequence ID" value="AAA30169.1"/>
    <property type="molecule type" value="mRNA"/>
</dbReference>
<dbReference type="EMBL" id="M61131">
    <property type="protein sequence ID" value="AAA30170.1"/>
    <property type="status" value="ALT_SEQ"/>
    <property type="molecule type" value="mRNA"/>
</dbReference>
<dbReference type="TCDB" id="9.B.87.1.23">
    <property type="family name" value="the selenoprotein p receptor (selp-receptor) family"/>
</dbReference>
<dbReference type="GlyCosmos" id="Q03650">
    <property type="glycosylation" value="53 sites, No reported glycans"/>
</dbReference>
<dbReference type="GO" id="GO:0020016">
    <property type="term" value="C:ciliary pocket"/>
    <property type="evidence" value="ECO:0007669"/>
    <property type="project" value="UniProtKB-SubCell"/>
</dbReference>
<dbReference type="GO" id="GO:0005886">
    <property type="term" value="C:plasma membrane"/>
    <property type="evidence" value="ECO:0007669"/>
    <property type="project" value="UniProtKB-SubCell"/>
</dbReference>
<dbReference type="GO" id="GO:0006897">
    <property type="term" value="P:endocytosis"/>
    <property type="evidence" value="ECO:0007669"/>
    <property type="project" value="UniProtKB-KW"/>
</dbReference>
<dbReference type="InterPro" id="IPR053359">
    <property type="entry name" value="CRAM"/>
</dbReference>
<dbReference type="InterPro" id="IPR009745">
    <property type="entry name" value="CRAM_rpt"/>
</dbReference>
<dbReference type="PANTHER" id="PTHR35577:SF7">
    <property type="entry name" value="CYSTEINE-RICH, ACIDIC INTEGRAL MEMBRANE PROTEIN"/>
    <property type="match status" value="1"/>
</dbReference>
<dbReference type="PANTHER" id="PTHR35577">
    <property type="entry name" value="CYSTEINE-RICH, ACIDIC INTEGRAL MEMBRANE PROTEIN-RELATED"/>
    <property type="match status" value="1"/>
</dbReference>
<dbReference type="Pfam" id="PF07016">
    <property type="entry name" value="CRAM_rpt"/>
    <property type="match status" value="65"/>
</dbReference>
<sequence length="945" mass="100382">MGNEAGPIFEESNAEVGTPPADAVHDDFFFDYKNATGYADDCNITGDCNETDDCDITGDCNETDDCNITGDCNETDDCNITGDCNETDDCNITGDCNETDDCNITGDCNETDDCDITGDCNETDDCNITGDCNETDDCNITGDCNETDDCNITGDCNETDDCDITGDCNETDDCNITGDCNETDDCDITGDCNETDDCNITGDCNETDDCNITGDCNETDDCNITGDCNETDDCNITGDCNETDDCNITGDCNETDDCNITGDCNETDDCDITGDCNETDDCNITGDCNETDDCNITGDCNETDDCNITGDCNETDDCNITGDCNETDDCNITGDCNETDDCNITGDCNETDDCDITGDCNETDDCNITGDCNETDDCNITGDCNETDDCNITGDCNETDDCNITGDCNETDDCNITGDCNETDDCDITGDCNETDDCNITGDCNETDDCDITGDCNETDDCNITGDCNETDDCNITGDCNETDDCNITGDCNETDDCNITGDCNETDDCNITGDCNETDDCNITGDCNETDDCDITGDCNETDDCNITGDCNETDDCNITGDCNETDDCNITGDCNETDDCNITGDCNETDDCNITGDCNETDDCDITGDCNETDDCNITGDCNETDDCDITGDCNETDDCNITGDCNETDDCNITGDCNETDDCNITGDCNETDDCNITGDCNETDDCNITGDCNETDDCNITGDCNETDDCDITGDCNETDDCNITGDCNETDDCNITGDCNETDDCNITGDCNETDDCNITGDCNETDDCNITGDCNETDDCDITGDCNETDDCNITGDCNETDDCDITGDCNETDDCNITGDCNETEVSDAADGTDGMFLKSSSSLKLVALCDGCPTEDSPKSSNAKGKGSSVSAGLLLLAGSTFLVLAVGLSAVLFLGRERQNAVVICDNEVMMEEVPGCLSDASFAVPVTQSSDEARP</sequence>
<organism>
    <name type="scientific">Trypanosoma brucei brucei</name>
    <dbReference type="NCBI Taxonomy" id="5702"/>
    <lineage>
        <taxon>Eukaryota</taxon>
        <taxon>Discoba</taxon>
        <taxon>Euglenozoa</taxon>
        <taxon>Kinetoplastea</taxon>
        <taxon>Metakinetoplastina</taxon>
        <taxon>Trypanosomatida</taxon>
        <taxon>Trypanosomatidae</taxon>
        <taxon>Trypanosoma</taxon>
    </lineage>
</organism>
<protein>
    <recommendedName>
        <fullName>Cysteine-rich, acidic integral membrane protein</fullName>
    </recommendedName>
</protein>
<gene>
    <name type="primary">CRAM</name>
</gene>
<comment type="function">
    <text>Supposed to function as cell surface receptor. Possibly involved in receptor-mediated endocytosis.</text>
</comment>
<comment type="subcellular location">
    <subcellularLocation>
        <location>Flagellar pocket</location>
    </subcellularLocation>
    <subcellularLocation>
        <location evidence="3">Cell membrane</location>
        <topology evidence="3">Single-pass membrane protein</topology>
    </subcellularLocation>
    <text>Concentrated in the flagellar pocket.</text>
</comment>
<keyword id="KW-1003">Cell membrane</keyword>
<keyword id="KW-0254">Endocytosis</keyword>
<keyword id="KW-0325">Glycoprotein</keyword>
<keyword id="KW-0472">Membrane</keyword>
<keyword id="KW-0677">Repeat</keyword>
<keyword id="KW-0732">Signal</keyword>
<keyword id="KW-0812">Transmembrane</keyword>
<keyword id="KW-1133">Transmembrane helix</keyword>
<evidence type="ECO:0000255" key="1"/>
<evidence type="ECO:0000256" key="2">
    <source>
        <dbReference type="SAM" id="MobiDB-lite"/>
    </source>
</evidence>
<evidence type="ECO:0000305" key="3"/>